<accession>Q7UID0</accession>
<organism>
    <name type="scientific">Rhodopirellula baltica (strain DSM 10527 / NCIMB 13988 / SH1)</name>
    <dbReference type="NCBI Taxonomy" id="243090"/>
    <lineage>
        <taxon>Bacteria</taxon>
        <taxon>Pseudomonadati</taxon>
        <taxon>Planctomycetota</taxon>
        <taxon>Planctomycetia</taxon>
        <taxon>Pirellulales</taxon>
        <taxon>Pirellulaceae</taxon>
        <taxon>Rhodopirellula</taxon>
    </lineage>
</organism>
<gene>
    <name evidence="1" type="primary">thyA</name>
    <name type="ordered locus">RB12614</name>
</gene>
<comment type="function">
    <text evidence="1">Catalyzes the reductive methylation of 2'-deoxyuridine-5'-monophosphate (dUMP) to 2'-deoxythymidine-5'-monophosphate (dTMP) while utilizing 5,10-methylenetetrahydrofolate (mTHF) as the methyl donor and reductant in the reaction, yielding dihydrofolate (DHF) as a by-product. This enzymatic reaction provides an intracellular de novo source of dTMP, an essential precursor for DNA biosynthesis.</text>
</comment>
<comment type="catalytic activity">
    <reaction evidence="1">
        <text>dUMP + (6R)-5,10-methylene-5,6,7,8-tetrahydrofolate = 7,8-dihydrofolate + dTMP</text>
        <dbReference type="Rhea" id="RHEA:12104"/>
        <dbReference type="ChEBI" id="CHEBI:15636"/>
        <dbReference type="ChEBI" id="CHEBI:57451"/>
        <dbReference type="ChEBI" id="CHEBI:63528"/>
        <dbReference type="ChEBI" id="CHEBI:246422"/>
        <dbReference type="EC" id="2.1.1.45"/>
    </reaction>
</comment>
<comment type="pathway">
    <text evidence="1">Pyrimidine metabolism; dTTP biosynthesis.</text>
</comment>
<comment type="subunit">
    <text evidence="1">Homodimer.</text>
</comment>
<comment type="subcellular location">
    <subcellularLocation>
        <location evidence="1">Cytoplasm</location>
    </subcellularLocation>
</comment>
<comment type="similarity">
    <text evidence="1">Belongs to the thymidylate synthase family. Bacterial-type ThyA subfamily.</text>
</comment>
<feature type="chain" id="PRO_0000141010" description="Thymidylate synthase">
    <location>
        <begin position="1"/>
        <end position="264"/>
    </location>
</feature>
<feature type="active site" description="Nucleophile" evidence="1">
    <location>
        <position position="146"/>
    </location>
</feature>
<feature type="binding site" description="in other chain" evidence="1">
    <location>
        <position position="21"/>
    </location>
    <ligand>
        <name>dUMP</name>
        <dbReference type="ChEBI" id="CHEBI:246422"/>
        <note>ligand shared between dimeric partners</note>
    </ligand>
</feature>
<feature type="binding site" evidence="1">
    <location>
        <position position="51"/>
    </location>
    <ligand>
        <name>(6R)-5,10-methylene-5,6,7,8-tetrahydrofolate</name>
        <dbReference type="ChEBI" id="CHEBI:15636"/>
    </ligand>
</feature>
<feature type="binding site" evidence="1">
    <location>
        <begin position="126"/>
        <end position="127"/>
    </location>
    <ligand>
        <name>dUMP</name>
        <dbReference type="ChEBI" id="CHEBI:246422"/>
        <note>ligand shared between dimeric partners</note>
    </ligand>
</feature>
<feature type="binding site" description="in other chain" evidence="1">
    <location>
        <begin position="166"/>
        <end position="169"/>
    </location>
    <ligand>
        <name>dUMP</name>
        <dbReference type="ChEBI" id="CHEBI:246422"/>
        <note>ligand shared between dimeric partners</note>
    </ligand>
</feature>
<feature type="binding site" evidence="1">
    <location>
        <position position="169"/>
    </location>
    <ligand>
        <name>(6R)-5,10-methylene-5,6,7,8-tetrahydrofolate</name>
        <dbReference type="ChEBI" id="CHEBI:15636"/>
    </ligand>
</feature>
<feature type="binding site" description="in other chain" evidence="1">
    <location>
        <position position="177"/>
    </location>
    <ligand>
        <name>dUMP</name>
        <dbReference type="ChEBI" id="CHEBI:246422"/>
        <note>ligand shared between dimeric partners</note>
    </ligand>
</feature>
<feature type="binding site" description="in other chain" evidence="1">
    <location>
        <begin position="207"/>
        <end position="209"/>
    </location>
    <ligand>
        <name>dUMP</name>
        <dbReference type="ChEBI" id="CHEBI:246422"/>
        <note>ligand shared between dimeric partners</note>
    </ligand>
</feature>
<feature type="binding site" evidence="1">
    <location>
        <position position="263"/>
    </location>
    <ligand>
        <name>(6R)-5,10-methylene-5,6,7,8-tetrahydrofolate</name>
        <dbReference type="ChEBI" id="CHEBI:15636"/>
    </ligand>
</feature>
<protein>
    <recommendedName>
        <fullName evidence="1">Thymidylate synthase</fullName>
        <shortName evidence="1">TS</shortName>
        <shortName evidence="1">TSase</shortName>
        <ecNumber evidence="1">2.1.1.45</ecNumber>
    </recommendedName>
</protein>
<sequence length="264" mass="30191">MQGYLQLLDEVLHDGIDRDDRTGVGTRSLFGRQMRFDLAEGFPLLTTKKLHIRSILHELLWFLRGDTNIGYLKENKVSIWDEWADEAGDLGPVYGHQWRSWEGANGDTVDQIAWVENEIRTNPRSRRLVVSAWNVADVPKMALPPCHLLFQFYVSGGRLSCQLYQRSADLFLGVPFNIASYAMLTSMMAHVTGLKPGEFVHTLGDVHLYSNHFDQAREQLSRTPRPLPTFHIKRDVASVTDFQFDDFELTNYDPHPHIKAPVAV</sequence>
<evidence type="ECO:0000255" key="1">
    <source>
        <dbReference type="HAMAP-Rule" id="MF_00008"/>
    </source>
</evidence>
<reference key="1">
    <citation type="journal article" date="2003" name="Proc. Natl. Acad. Sci. U.S.A.">
        <title>Complete genome sequence of the marine planctomycete Pirellula sp. strain 1.</title>
        <authorList>
            <person name="Gloeckner F.O."/>
            <person name="Kube M."/>
            <person name="Bauer M."/>
            <person name="Teeling H."/>
            <person name="Lombardot T."/>
            <person name="Ludwig W."/>
            <person name="Gade D."/>
            <person name="Beck A."/>
            <person name="Borzym K."/>
            <person name="Heitmann K."/>
            <person name="Rabus R."/>
            <person name="Schlesner H."/>
            <person name="Amann R."/>
            <person name="Reinhardt R."/>
        </authorList>
    </citation>
    <scope>NUCLEOTIDE SEQUENCE [LARGE SCALE GENOMIC DNA]</scope>
    <source>
        <strain>DSM 10527 / NCIMB 13988 / SH1</strain>
    </source>
</reference>
<dbReference type="EC" id="2.1.1.45" evidence="1"/>
<dbReference type="EMBL" id="BX294155">
    <property type="protein sequence ID" value="CAD77684.1"/>
    <property type="molecule type" value="Genomic_DNA"/>
</dbReference>
<dbReference type="RefSeq" id="NP_870607.1">
    <property type="nucleotide sequence ID" value="NC_005027.1"/>
</dbReference>
<dbReference type="RefSeq" id="WP_007330472.1">
    <property type="nucleotide sequence ID" value="NC_005027.1"/>
</dbReference>
<dbReference type="SMR" id="Q7UID0"/>
<dbReference type="FunCoup" id="Q7UID0">
    <property type="interactions" value="387"/>
</dbReference>
<dbReference type="STRING" id="243090.RB12614"/>
<dbReference type="EnsemblBacteria" id="CAD77684">
    <property type="protein sequence ID" value="CAD77684"/>
    <property type="gene ID" value="RB12614"/>
</dbReference>
<dbReference type="KEGG" id="rba:RB12614"/>
<dbReference type="PATRIC" id="fig|243090.15.peg.6119"/>
<dbReference type="eggNOG" id="COG0207">
    <property type="taxonomic scope" value="Bacteria"/>
</dbReference>
<dbReference type="HOGENOM" id="CLU_021669_0_0_0"/>
<dbReference type="InParanoid" id="Q7UID0"/>
<dbReference type="OrthoDB" id="9774633at2"/>
<dbReference type="UniPathway" id="UPA00575"/>
<dbReference type="Proteomes" id="UP000001025">
    <property type="component" value="Chromosome"/>
</dbReference>
<dbReference type="GO" id="GO:0005829">
    <property type="term" value="C:cytosol"/>
    <property type="evidence" value="ECO:0000318"/>
    <property type="project" value="GO_Central"/>
</dbReference>
<dbReference type="GO" id="GO:0004799">
    <property type="term" value="F:thymidylate synthase activity"/>
    <property type="evidence" value="ECO:0000318"/>
    <property type="project" value="GO_Central"/>
</dbReference>
<dbReference type="GO" id="GO:0006231">
    <property type="term" value="P:dTMP biosynthetic process"/>
    <property type="evidence" value="ECO:0000318"/>
    <property type="project" value="GO_Central"/>
</dbReference>
<dbReference type="GO" id="GO:0006235">
    <property type="term" value="P:dTTP biosynthetic process"/>
    <property type="evidence" value="ECO:0007669"/>
    <property type="project" value="UniProtKB-UniRule"/>
</dbReference>
<dbReference type="GO" id="GO:0032259">
    <property type="term" value="P:methylation"/>
    <property type="evidence" value="ECO:0007669"/>
    <property type="project" value="UniProtKB-KW"/>
</dbReference>
<dbReference type="CDD" id="cd00351">
    <property type="entry name" value="TS_Pyrimidine_HMase"/>
    <property type="match status" value="1"/>
</dbReference>
<dbReference type="FunFam" id="3.30.572.10:FF:000013">
    <property type="entry name" value="Thymidylate synthase"/>
    <property type="match status" value="1"/>
</dbReference>
<dbReference type="Gene3D" id="3.30.572.10">
    <property type="entry name" value="Thymidylate synthase/dCMP hydroxymethylase domain"/>
    <property type="match status" value="1"/>
</dbReference>
<dbReference type="HAMAP" id="MF_00008">
    <property type="entry name" value="Thymidy_synth_bact"/>
    <property type="match status" value="1"/>
</dbReference>
<dbReference type="InterPro" id="IPR045097">
    <property type="entry name" value="Thymidate_synth/dCMP_Mease"/>
</dbReference>
<dbReference type="InterPro" id="IPR023451">
    <property type="entry name" value="Thymidate_synth/dCMP_Mease_dom"/>
</dbReference>
<dbReference type="InterPro" id="IPR036926">
    <property type="entry name" value="Thymidate_synth/dCMP_Mease_sf"/>
</dbReference>
<dbReference type="InterPro" id="IPR000398">
    <property type="entry name" value="Thymidylate_synthase"/>
</dbReference>
<dbReference type="InterPro" id="IPR020940">
    <property type="entry name" value="Thymidylate_synthase_AS"/>
</dbReference>
<dbReference type="NCBIfam" id="NF002497">
    <property type="entry name" value="PRK01827.1-3"/>
    <property type="match status" value="1"/>
</dbReference>
<dbReference type="NCBIfam" id="NF002499">
    <property type="entry name" value="PRK01827.1-5"/>
    <property type="match status" value="1"/>
</dbReference>
<dbReference type="NCBIfam" id="TIGR03284">
    <property type="entry name" value="thym_sym"/>
    <property type="match status" value="2"/>
</dbReference>
<dbReference type="PANTHER" id="PTHR11548:SF9">
    <property type="entry name" value="THYMIDYLATE SYNTHASE"/>
    <property type="match status" value="1"/>
</dbReference>
<dbReference type="PANTHER" id="PTHR11548">
    <property type="entry name" value="THYMIDYLATE SYNTHASE 1"/>
    <property type="match status" value="1"/>
</dbReference>
<dbReference type="Pfam" id="PF00303">
    <property type="entry name" value="Thymidylat_synt"/>
    <property type="match status" value="1"/>
</dbReference>
<dbReference type="PRINTS" id="PR00108">
    <property type="entry name" value="THYMDSNTHASE"/>
</dbReference>
<dbReference type="SUPFAM" id="SSF55831">
    <property type="entry name" value="Thymidylate synthase/dCMP hydroxymethylase"/>
    <property type="match status" value="1"/>
</dbReference>
<dbReference type="PROSITE" id="PS00091">
    <property type="entry name" value="THYMIDYLATE_SYNTHASE"/>
    <property type="match status" value="1"/>
</dbReference>
<proteinExistence type="inferred from homology"/>
<keyword id="KW-0963">Cytoplasm</keyword>
<keyword id="KW-0489">Methyltransferase</keyword>
<keyword id="KW-0545">Nucleotide biosynthesis</keyword>
<keyword id="KW-1185">Reference proteome</keyword>
<keyword id="KW-0808">Transferase</keyword>
<name>TYSY_RHOBA</name>